<reference evidence="6" key="1">
    <citation type="journal article" date="2009" name="J. Plant Physiol.">
        <title>Analysis of the soluble cell wall proteome of gymnosperms.</title>
        <authorList>
            <person name="Uzal E.N."/>
            <person name="Gomez-Ros L.V."/>
            <person name="Hernandez J.A."/>
            <person name="Pedreno M.A."/>
            <person name="Cuello J."/>
            <person name="Ros Barcelo A."/>
        </authorList>
    </citation>
    <scope>PROTEIN SEQUENCE</scope>
    <scope>SUBCELLULAR LOCATION</scope>
    <source>
        <tissue evidence="4">Callus</tissue>
    </source>
</reference>
<protein>
    <recommendedName>
        <fullName>Peroxidase 1</fullName>
        <ecNumber>1.11.1.7</ecNumber>
    </recommendedName>
</protein>
<accession>P85346</accession>
<organism>
    <name type="scientific">Cycas revoluta</name>
    <name type="common">Sago palm</name>
    <dbReference type="NCBI Taxonomy" id="3396"/>
    <lineage>
        <taxon>Eukaryota</taxon>
        <taxon>Viridiplantae</taxon>
        <taxon>Streptophyta</taxon>
        <taxon>Embryophyta</taxon>
        <taxon>Tracheophyta</taxon>
        <taxon>Spermatophyta</taxon>
        <taxon>Cycadidae</taxon>
        <taxon>Cycadales</taxon>
        <taxon>Cycadaceae</taxon>
        <taxon>Cycas</taxon>
    </lineage>
</organism>
<comment type="function">
    <text evidence="6">Removal of H(2)O(2), oxidation of toxic reductants, biosynthesis and degradation of lignin, suberization, auxin catabolism, response to environmental stresses such as wounding, pathogen attack and oxidative stress. These functions might be dependent on each isozyme/isoform in each plant tissue.</text>
</comment>
<comment type="catalytic activity">
    <reaction>
        <text>2 a phenolic donor + H2O2 = 2 a phenolic radical donor + 2 H2O</text>
        <dbReference type="Rhea" id="RHEA:56136"/>
        <dbReference type="ChEBI" id="CHEBI:15377"/>
        <dbReference type="ChEBI" id="CHEBI:16240"/>
        <dbReference type="ChEBI" id="CHEBI:139520"/>
        <dbReference type="ChEBI" id="CHEBI:139521"/>
        <dbReference type="EC" id="1.11.1.7"/>
    </reaction>
</comment>
<comment type="cofactor">
    <cofactor evidence="1 3">
        <name>Ca(2+)</name>
        <dbReference type="ChEBI" id="CHEBI:29108"/>
    </cofactor>
    <text evidence="1 3">Binds 2 calcium ions per subunit.</text>
</comment>
<comment type="cofactor">
    <cofactor evidence="1 3">
        <name>heme b</name>
        <dbReference type="ChEBI" id="CHEBI:60344"/>
    </cofactor>
    <text evidence="1 3">Binds 1 heme b (iron(II)-protoporphyrin IX) group per subunit.</text>
</comment>
<comment type="subcellular location">
    <subcellularLocation>
        <location evidence="2 3">Secreted</location>
    </subcellularLocation>
    <subcellularLocation>
        <location evidence="4">Secreted</location>
        <location evidence="4">Cell wall</location>
    </subcellularLocation>
</comment>
<comment type="similarity">
    <text evidence="3">Belongs to the peroxidase family. Classical plant (class III) peroxidase subfamily.</text>
</comment>
<dbReference type="EC" id="1.11.1.7"/>
<dbReference type="GO" id="GO:0005576">
    <property type="term" value="C:extracellular region"/>
    <property type="evidence" value="ECO:0007669"/>
    <property type="project" value="UniProtKB-SubCell"/>
</dbReference>
<dbReference type="GO" id="GO:0140825">
    <property type="term" value="F:lactoperoxidase activity"/>
    <property type="evidence" value="ECO:0007669"/>
    <property type="project" value="UniProtKB-EC"/>
</dbReference>
<dbReference type="GO" id="GO:0046872">
    <property type="term" value="F:metal ion binding"/>
    <property type="evidence" value="ECO:0007669"/>
    <property type="project" value="UniProtKB-KW"/>
</dbReference>
<dbReference type="GO" id="GO:0042744">
    <property type="term" value="P:hydrogen peroxide catabolic process"/>
    <property type="evidence" value="ECO:0007669"/>
    <property type="project" value="UniProtKB-KW"/>
</dbReference>
<sequence length="9" mass="1006">GFDVVDNIK</sequence>
<name>PER1_CYCRE</name>
<evidence type="ECO:0000250" key="1">
    <source>
        <dbReference type="UniProtKB" id="P22195"/>
    </source>
</evidence>
<evidence type="ECO:0000250" key="2">
    <source>
        <dbReference type="UniProtKB" id="P84516"/>
    </source>
</evidence>
<evidence type="ECO:0000255" key="3">
    <source>
        <dbReference type="PROSITE-ProRule" id="PRU00297"/>
    </source>
</evidence>
<evidence type="ECO:0000269" key="4">
    <source>
    </source>
</evidence>
<evidence type="ECO:0000303" key="5">
    <source>
    </source>
</evidence>
<evidence type="ECO:0000305" key="6"/>
<proteinExistence type="evidence at protein level"/>
<feature type="chain" id="PRO_0000315883" description="Peroxidase 1">
    <location>
        <begin position="1" status="less than"/>
        <end position="9" status="greater than"/>
    </location>
</feature>
<feature type="non-terminal residue" evidence="5">
    <location>
        <position position="1"/>
    </location>
</feature>
<feature type="non-terminal residue" evidence="5">
    <location>
        <position position="9"/>
    </location>
</feature>
<keyword id="KW-0106">Calcium</keyword>
<keyword id="KW-0134">Cell wall</keyword>
<keyword id="KW-0903">Direct protein sequencing</keyword>
<keyword id="KW-0349">Heme</keyword>
<keyword id="KW-0376">Hydrogen peroxide</keyword>
<keyword id="KW-0408">Iron</keyword>
<keyword id="KW-0479">Metal-binding</keyword>
<keyword id="KW-0560">Oxidoreductase</keyword>
<keyword id="KW-0575">Peroxidase</keyword>
<keyword id="KW-0964">Secreted</keyword>